<proteinExistence type="inferred from homology"/>
<gene>
    <name evidence="1" type="primary">rplO</name>
    <name type="ordered locus">stu1915</name>
</gene>
<accession>Q5M2D2</accession>
<evidence type="ECO:0000255" key="1">
    <source>
        <dbReference type="HAMAP-Rule" id="MF_01341"/>
    </source>
</evidence>
<evidence type="ECO:0000256" key="2">
    <source>
        <dbReference type="SAM" id="MobiDB-lite"/>
    </source>
</evidence>
<evidence type="ECO:0000305" key="3"/>
<reference key="1">
    <citation type="journal article" date="2004" name="Nat. Biotechnol.">
        <title>Complete sequence and comparative genome analysis of the dairy bacterium Streptococcus thermophilus.</title>
        <authorList>
            <person name="Bolotin A."/>
            <person name="Quinquis B."/>
            <person name="Renault P."/>
            <person name="Sorokin A."/>
            <person name="Ehrlich S.D."/>
            <person name="Kulakauskas S."/>
            <person name="Lapidus A."/>
            <person name="Goltsman E."/>
            <person name="Mazur M."/>
            <person name="Pusch G.D."/>
            <person name="Fonstein M."/>
            <person name="Overbeek R."/>
            <person name="Kyprides N."/>
            <person name="Purnelle B."/>
            <person name="Prozzi D."/>
            <person name="Ngui K."/>
            <person name="Masuy D."/>
            <person name="Hancy F."/>
            <person name="Burteau S."/>
            <person name="Boutry M."/>
            <person name="Delcour J."/>
            <person name="Goffeau A."/>
            <person name="Hols P."/>
        </authorList>
    </citation>
    <scope>NUCLEOTIDE SEQUENCE [LARGE SCALE GENOMIC DNA]</scope>
    <source>
        <strain>ATCC BAA-250 / LMG 18311</strain>
    </source>
</reference>
<keyword id="KW-1185">Reference proteome</keyword>
<keyword id="KW-0687">Ribonucleoprotein</keyword>
<keyword id="KW-0689">Ribosomal protein</keyword>
<keyword id="KW-0694">RNA-binding</keyword>
<keyword id="KW-0699">rRNA-binding</keyword>
<name>RL15_STRT2</name>
<comment type="function">
    <text evidence="1">Binds to the 23S rRNA.</text>
</comment>
<comment type="subunit">
    <text evidence="1">Part of the 50S ribosomal subunit.</text>
</comment>
<comment type="similarity">
    <text evidence="1">Belongs to the universal ribosomal protein uL15 family.</text>
</comment>
<comment type="sequence caution" evidence="3">
    <conflict type="erroneous initiation">
        <sequence resource="EMBL-CDS" id="AAV61513"/>
    </conflict>
</comment>
<protein>
    <recommendedName>
        <fullName evidence="1">Large ribosomal subunit protein uL15</fullName>
    </recommendedName>
    <alternativeName>
        <fullName evidence="3">50S ribosomal protein L15</fullName>
    </alternativeName>
</protein>
<dbReference type="EMBL" id="CP000023">
    <property type="protein sequence ID" value="AAV61513.1"/>
    <property type="status" value="ALT_INIT"/>
    <property type="molecule type" value="Genomic_DNA"/>
</dbReference>
<dbReference type="RefSeq" id="WP_002952138.1">
    <property type="nucleotide sequence ID" value="NC_006448.1"/>
</dbReference>
<dbReference type="SMR" id="Q5M2D2"/>
<dbReference type="STRING" id="264199.stu1915"/>
<dbReference type="GeneID" id="66899643"/>
<dbReference type="KEGG" id="stl:stu1915"/>
<dbReference type="eggNOG" id="COG0200">
    <property type="taxonomic scope" value="Bacteria"/>
</dbReference>
<dbReference type="HOGENOM" id="CLU_055188_4_2_9"/>
<dbReference type="Proteomes" id="UP000001170">
    <property type="component" value="Chromosome"/>
</dbReference>
<dbReference type="GO" id="GO:0022625">
    <property type="term" value="C:cytosolic large ribosomal subunit"/>
    <property type="evidence" value="ECO:0007669"/>
    <property type="project" value="TreeGrafter"/>
</dbReference>
<dbReference type="GO" id="GO:0019843">
    <property type="term" value="F:rRNA binding"/>
    <property type="evidence" value="ECO:0007669"/>
    <property type="project" value="UniProtKB-UniRule"/>
</dbReference>
<dbReference type="GO" id="GO:0003735">
    <property type="term" value="F:structural constituent of ribosome"/>
    <property type="evidence" value="ECO:0007669"/>
    <property type="project" value="InterPro"/>
</dbReference>
<dbReference type="GO" id="GO:0006412">
    <property type="term" value="P:translation"/>
    <property type="evidence" value="ECO:0007669"/>
    <property type="project" value="UniProtKB-UniRule"/>
</dbReference>
<dbReference type="Gene3D" id="3.100.10.10">
    <property type="match status" value="1"/>
</dbReference>
<dbReference type="HAMAP" id="MF_01341">
    <property type="entry name" value="Ribosomal_uL15"/>
    <property type="match status" value="1"/>
</dbReference>
<dbReference type="InterPro" id="IPR030878">
    <property type="entry name" value="Ribosomal_uL15"/>
</dbReference>
<dbReference type="InterPro" id="IPR021131">
    <property type="entry name" value="Ribosomal_uL15/eL18"/>
</dbReference>
<dbReference type="InterPro" id="IPR036227">
    <property type="entry name" value="Ribosomal_uL15/eL18_sf"/>
</dbReference>
<dbReference type="InterPro" id="IPR005749">
    <property type="entry name" value="Ribosomal_uL15_bac-type"/>
</dbReference>
<dbReference type="InterPro" id="IPR001196">
    <property type="entry name" value="Ribosomal_uL15_CS"/>
</dbReference>
<dbReference type="NCBIfam" id="TIGR01071">
    <property type="entry name" value="rplO_bact"/>
    <property type="match status" value="1"/>
</dbReference>
<dbReference type="PANTHER" id="PTHR12934">
    <property type="entry name" value="50S RIBOSOMAL PROTEIN L15"/>
    <property type="match status" value="1"/>
</dbReference>
<dbReference type="PANTHER" id="PTHR12934:SF11">
    <property type="entry name" value="LARGE RIBOSOMAL SUBUNIT PROTEIN UL15M"/>
    <property type="match status" value="1"/>
</dbReference>
<dbReference type="Pfam" id="PF00828">
    <property type="entry name" value="Ribosomal_L27A"/>
    <property type="match status" value="1"/>
</dbReference>
<dbReference type="SUPFAM" id="SSF52080">
    <property type="entry name" value="Ribosomal proteins L15p and L18e"/>
    <property type="match status" value="1"/>
</dbReference>
<dbReference type="PROSITE" id="PS00475">
    <property type="entry name" value="RIBOSOMAL_L15"/>
    <property type="match status" value="1"/>
</dbReference>
<sequence length="146" mass="15545">MKLHELKPAEGSRKVRNRVGRGTSSGNGKTSGRGQKGQKARSGVGLRPGFEGGQTPLFRRLPKRGFTNINAKEYTLVNLEQLNVFEDGTEVTPVVLKEAGIIRAEKSGVKVLGNGELTKKLTVKAAKFSKSAEAAITAKGGSIEVI</sequence>
<organism>
    <name type="scientific">Streptococcus thermophilus (strain ATCC BAA-250 / LMG 18311)</name>
    <dbReference type="NCBI Taxonomy" id="264199"/>
    <lineage>
        <taxon>Bacteria</taxon>
        <taxon>Bacillati</taxon>
        <taxon>Bacillota</taxon>
        <taxon>Bacilli</taxon>
        <taxon>Lactobacillales</taxon>
        <taxon>Streptococcaceae</taxon>
        <taxon>Streptococcus</taxon>
    </lineage>
</organism>
<feature type="chain" id="PRO_0000104829" description="Large ribosomal subunit protein uL15">
    <location>
        <begin position="1"/>
        <end position="146"/>
    </location>
</feature>
<feature type="region of interest" description="Disordered" evidence="2">
    <location>
        <begin position="1"/>
        <end position="57"/>
    </location>
</feature>
<feature type="compositionally biased region" description="Basic and acidic residues" evidence="2">
    <location>
        <begin position="1"/>
        <end position="13"/>
    </location>
</feature>
<feature type="compositionally biased region" description="Gly residues" evidence="2">
    <location>
        <begin position="23"/>
        <end position="35"/>
    </location>
</feature>